<name>SYW_MYCLE</name>
<evidence type="ECO:0000255" key="1">
    <source>
        <dbReference type="HAMAP-Rule" id="MF_00140"/>
    </source>
</evidence>
<keyword id="KW-0030">Aminoacyl-tRNA synthetase</keyword>
<keyword id="KW-0067">ATP-binding</keyword>
<keyword id="KW-0963">Cytoplasm</keyword>
<keyword id="KW-0436">Ligase</keyword>
<keyword id="KW-0547">Nucleotide-binding</keyword>
<keyword id="KW-0648">Protein biosynthesis</keyword>
<keyword id="KW-1185">Reference proteome</keyword>
<feature type="chain" id="PRO_0000136650" description="Tryptophan--tRNA ligase">
    <location>
        <begin position="1"/>
        <end position="343"/>
    </location>
</feature>
<feature type="short sequence motif" description="'HIGH' region" evidence="1">
    <location>
        <begin position="16"/>
        <end position="25"/>
    </location>
</feature>
<feature type="short sequence motif" description="'KMSKS' region" evidence="1">
    <location>
        <begin position="205"/>
        <end position="209"/>
    </location>
</feature>
<feature type="binding site" evidence="1">
    <location>
        <begin position="15"/>
        <end position="17"/>
    </location>
    <ligand>
        <name>ATP</name>
        <dbReference type="ChEBI" id="CHEBI:30616"/>
    </ligand>
</feature>
<feature type="binding site" evidence="1">
    <location>
        <begin position="24"/>
        <end position="25"/>
    </location>
    <ligand>
        <name>ATP</name>
        <dbReference type="ChEBI" id="CHEBI:30616"/>
    </ligand>
</feature>
<feature type="binding site" evidence="1">
    <location>
        <position position="145"/>
    </location>
    <ligand>
        <name>L-tryptophan</name>
        <dbReference type="ChEBI" id="CHEBI:57912"/>
    </ligand>
</feature>
<feature type="binding site" evidence="1">
    <location>
        <begin position="157"/>
        <end position="159"/>
    </location>
    <ligand>
        <name>ATP</name>
        <dbReference type="ChEBI" id="CHEBI:30616"/>
    </ligand>
</feature>
<feature type="binding site" evidence="1">
    <location>
        <position position="196"/>
    </location>
    <ligand>
        <name>ATP</name>
        <dbReference type="ChEBI" id="CHEBI:30616"/>
    </ligand>
</feature>
<feature type="binding site" evidence="1">
    <location>
        <begin position="205"/>
        <end position="209"/>
    </location>
    <ligand>
        <name>ATP</name>
        <dbReference type="ChEBI" id="CHEBI:30616"/>
    </ligand>
</feature>
<sequence>MSTATGFSRIFSGVQPTSDSLHLGNALGAITQWVALQYDHPDEYEAFFCVVDLHAITIAQDPETLWRRTLVTAAQYLALGIDPGRAVVFVQSHVPAHTQLAWVLGCFTGFGQASRMTQFKDKALRQGADSTTVGLFTYPVLQAADVLAYDTDLVPVGEDQRQHLELARDLAQRFNSRFPDTFVVPDMFIPKMAAKIYDLADPTSKMSKSASSDAGLINLLDDPALSVKKIRAAVTDSEREIRYDPEVKPGVSNLLNIQSAVTGVDVDTLVQRYVGHGYGDLKKDTAEAVVEFVSPIKDRVDELMADLTELEVVLAVGAQRAQDVAGKTMQRVYDRLGFLPQRG</sequence>
<dbReference type="EC" id="6.1.1.2" evidence="1"/>
<dbReference type="EMBL" id="U00022">
    <property type="protein sequence ID" value="AAA17323.1"/>
    <property type="molecule type" value="Genomic_DNA"/>
</dbReference>
<dbReference type="EMBL" id="AL583919">
    <property type="protein sequence ID" value="CAC30195.1"/>
    <property type="molecule type" value="Genomic_DNA"/>
</dbReference>
<dbReference type="PIR" id="S73024">
    <property type="entry name" value="S73024"/>
</dbReference>
<dbReference type="RefSeq" id="NP_301552.1">
    <property type="nucleotide sequence ID" value="NC_002677.1"/>
</dbReference>
<dbReference type="RefSeq" id="WP_010907876.1">
    <property type="nucleotide sequence ID" value="NC_002677.1"/>
</dbReference>
<dbReference type="SMR" id="Q49901"/>
<dbReference type="STRING" id="272631.gene:17574510"/>
<dbReference type="KEGG" id="mle:ML0686"/>
<dbReference type="PATRIC" id="fig|272631.5.peg.1226"/>
<dbReference type="Leproma" id="ML0686"/>
<dbReference type="eggNOG" id="COG0180">
    <property type="taxonomic scope" value="Bacteria"/>
</dbReference>
<dbReference type="HOGENOM" id="CLU_029244_1_1_11"/>
<dbReference type="OrthoDB" id="9801042at2"/>
<dbReference type="Proteomes" id="UP000000806">
    <property type="component" value="Chromosome"/>
</dbReference>
<dbReference type="GO" id="GO:0005829">
    <property type="term" value="C:cytosol"/>
    <property type="evidence" value="ECO:0007669"/>
    <property type="project" value="TreeGrafter"/>
</dbReference>
<dbReference type="GO" id="GO:0005524">
    <property type="term" value="F:ATP binding"/>
    <property type="evidence" value="ECO:0007669"/>
    <property type="project" value="UniProtKB-UniRule"/>
</dbReference>
<dbReference type="GO" id="GO:0004830">
    <property type="term" value="F:tryptophan-tRNA ligase activity"/>
    <property type="evidence" value="ECO:0007669"/>
    <property type="project" value="UniProtKB-UniRule"/>
</dbReference>
<dbReference type="GO" id="GO:0006436">
    <property type="term" value="P:tryptophanyl-tRNA aminoacylation"/>
    <property type="evidence" value="ECO:0007669"/>
    <property type="project" value="UniProtKB-UniRule"/>
</dbReference>
<dbReference type="CDD" id="cd00806">
    <property type="entry name" value="TrpRS_core"/>
    <property type="match status" value="1"/>
</dbReference>
<dbReference type="FunFam" id="1.10.240.10:FF:000002">
    <property type="entry name" value="Tryptophan--tRNA ligase"/>
    <property type="match status" value="1"/>
</dbReference>
<dbReference type="Gene3D" id="3.40.50.620">
    <property type="entry name" value="HUPs"/>
    <property type="match status" value="1"/>
</dbReference>
<dbReference type="Gene3D" id="1.10.240.10">
    <property type="entry name" value="Tyrosyl-Transfer RNA Synthetase"/>
    <property type="match status" value="1"/>
</dbReference>
<dbReference type="HAMAP" id="MF_00140_B">
    <property type="entry name" value="Trp_tRNA_synth_B"/>
    <property type="match status" value="1"/>
</dbReference>
<dbReference type="InterPro" id="IPR001412">
    <property type="entry name" value="aa-tRNA-synth_I_CS"/>
</dbReference>
<dbReference type="InterPro" id="IPR002305">
    <property type="entry name" value="aa-tRNA-synth_Ic"/>
</dbReference>
<dbReference type="InterPro" id="IPR014729">
    <property type="entry name" value="Rossmann-like_a/b/a_fold"/>
</dbReference>
<dbReference type="InterPro" id="IPR002306">
    <property type="entry name" value="Trp-tRNA-ligase"/>
</dbReference>
<dbReference type="InterPro" id="IPR024109">
    <property type="entry name" value="Trp-tRNA-ligase_bac-type"/>
</dbReference>
<dbReference type="InterPro" id="IPR050203">
    <property type="entry name" value="Trp-tRNA_synthetase"/>
</dbReference>
<dbReference type="NCBIfam" id="TIGR00233">
    <property type="entry name" value="trpS"/>
    <property type="match status" value="1"/>
</dbReference>
<dbReference type="PANTHER" id="PTHR43766">
    <property type="entry name" value="TRYPTOPHAN--TRNA LIGASE, MITOCHONDRIAL"/>
    <property type="match status" value="1"/>
</dbReference>
<dbReference type="PANTHER" id="PTHR43766:SF1">
    <property type="entry name" value="TRYPTOPHAN--TRNA LIGASE, MITOCHONDRIAL"/>
    <property type="match status" value="1"/>
</dbReference>
<dbReference type="Pfam" id="PF00579">
    <property type="entry name" value="tRNA-synt_1b"/>
    <property type="match status" value="1"/>
</dbReference>
<dbReference type="PRINTS" id="PR01039">
    <property type="entry name" value="TRNASYNTHTRP"/>
</dbReference>
<dbReference type="SUPFAM" id="SSF52374">
    <property type="entry name" value="Nucleotidylyl transferase"/>
    <property type="match status" value="1"/>
</dbReference>
<dbReference type="PROSITE" id="PS00178">
    <property type="entry name" value="AA_TRNA_LIGASE_I"/>
    <property type="match status" value="1"/>
</dbReference>
<comment type="function">
    <text evidence="1">Catalyzes the attachment of tryptophan to tRNA(Trp).</text>
</comment>
<comment type="catalytic activity">
    <reaction evidence="1">
        <text>tRNA(Trp) + L-tryptophan + ATP = L-tryptophyl-tRNA(Trp) + AMP + diphosphate + H(+)</text>
        <dbReference type="Rhea" id="RHEA:24080"/>
        <dbReference type="Rhea" id="RHEA-COMP:9671"/>
        <dbReference type="Rhea" id="RHEA-COMP:9705"/>
        <dbReference type="ChEBI" id="CHEBI:15378"/>
        <dbReference type="ChEBI" id="CHEBI:30616"/>
        <dbReference type="ChEBI" id="CHEBI:33019"/>
        <dbReference type="ChEBI" id="CHEBI:57912"/>
        <dbReference type="ChEBI" id="CHEBI:78442"/>
        <dbReference type="ChEBI" id="CHEBI:78535"/>
        <dbReference type="ChEBI" id="CHEBI:456215"/>
        <dbReference type="EC" id="6.1.1.2"/>
    </reaction>
</comment>
<comment type="subunit">
    <text evidence="1">Homodimer.</text>
</comment>
<comment type="subcellular location">
    <subcellularLocation>
        <location evidence="1">Cytoplasm</location>
    </subcellularLocation>
</comment>
<comment type="similarity">
    <text evidence="1">Belongs to the class-I aminoacyl-tRNA synthetase family.</text>
</comment>
<protein>
    <recommendedName>
        <fullName evidence="1">Tryptophan--tRNA ligase</fullName>
        <ecNumber evidence="1">6.1.1.2</ecNumber>
    </recommendedName>
    <alternativeName>
        <fullName evidence="1">Tryptophanyl-tRNA synthetase</fullName>
        <shortName evidence="1">TrpRS</shortName>
    </alternativeName>
</protein>
<reference key="1">
    <citation type="submission" date="1994-03" db="EMBL/GenBank/DDBJ databases">
        <authorList>
            <person name="Smith D.R."/>
            <person name="Robison K."/>
        </authorList>
    </citation>
    <scope>NUCLEOTIDE SEQUENCE [GENOMIC DNA]</scope>
</reference>
<reference key="2">
    <citation type="journal article" date="2001" name="Nature">
        <title>Massive gene decay in the leprosy bacillus.</title>
        <authorList>
            <person name="Cole S.T."/>
            <person name="Eiglmeier K."/>
            <person name="Parkhill J."/>
            <person name="James K.D."/>
            <person name="Thomson N.R."/>
            <person name="Wheeler P.R."/>
            <person name="Honore N."/>
            <person name="Garnier T."/>
            <person name="Churcher C.M."/>
            <person name="Harris D.E."/>
            <person name="Mungall K.L."/>
            <person name="Basham D."/>
            <person name="Brown D."/>
            <person name="Chillingworth T."/>
            <person name="Connor R."/>
            <person name="Davies R.M."/>
            <person name="Devlin K."/>
            <person name="Duthoy S."/>
            <person name="Feltwell T."/>
            <person name="Fraser A."/>
            <person name="Hamlin N."/>
            <person name="Holroyd S."/>
            <person name="Hornsby T."/>
            <person name="Jagels K."/>
            <person name="Lacroix C."/>
            <person name="Maclean J."/>
            <person name="Moule S."/>
            <person name="Murphy L.D."/>
            <person name="Oliver K."/>
            <person name="Quail M.A."/>
            <person name="Rajandream M.A."/>
            <person name="Rutherford K.M."/>
            <person name="Rutter S."/>
            <person name="Seeger K."/>
            <person name="Simon S."/>
            <person name="Simmonds M."/>
            <person name="Skelton J."/>
            <person name="Squares R."/>
            <person name="Squares S."/>
            <person name="Stevens K."/>
            <person name="Taylor K."/>
            <person name="Whitehead S."/>
            <person name="Woodward J.R."/>
            <person name="Barrell B.G."/>
        </authorList>
    </citation>
    <scope>NUCLEOTIDE SEQUENCE [LARGE SCALE GENOMIC DNA]</scope>
    <source>
        <strain>TN</strain>
    </source>
</reference>
<accession>Q49901</accession>
<gene>
    <name evidence="1" type="primary">trpS</name>
    <name type="ordered locus">ML0686</name>
    <name type="ORF">L308_C1_147</name>
</gene>
<organism>
    <name type="scientific">Mycobacterium leprae (strain TN)</name>
    <dbReference type="NCBI Taxonomy" id="272631"/>
    <lineage>
        <taxon>Bacteria</taxon>
        <taxon>Bacillati</taxon>
        <taxon>Actinomycetota</taxon>
        <taxon>Actinomycetes</taxon>
        <taxon>Mycobacteriales</taxon>
        <taxon>Mycobacteriaceae</taxon>
        <taxon>Mycobacterium</taxon>
    </lineage>
</organism>
<proteinExistence type="inferred from homology"/>